<accession>Q8PXJ6</accession>
<organism>
    <name type="scientific">Methanosarcina mazei (strain ATCC BAA-159 / DSM 3647 / Goe1 / Go1 / JCM 11833 / OCM 88)</name>
    <name type="common">Methanosarcina frisia</name>
    <dbReference type="NCBI Taxonomy" id="192952"/>
    <lineage>
        <taxon>Archaea</taxon>
        <taxon>Methanobacteriati</taxon>
        <taxon>Methanobacteriota</taxon>
        <taxon>Stenosarchaea group</taxon>
        <taxon>Methanomicrobia</taxon>
        <taxon>Methanosarcinales</taxon>
        <taxon>Methanosarcinaceae</taxon>
        <taxon>Methanosarcina</taxon>
    </lineage>
</organism>
<dbReference type="EC" id="3.5.4.39" evidence="1"/>
<dbReference type="EMBL" id="AE008384">
    <property type="protein sequence ID" value="AAM30918.1"/>
    <property type="molecule type" value="Genomic_DNA"/>
</dbReference>
<dbReference type="RefSeq" id="WP_011033171.1">
    <property type="nucleotide sequence ID" value="NC_003901.1"/>
</dbReference>
<dbReference type="SMR" id="Q8PXJ6"/>
<dbReference type="GeneID" id="82160257"/>
<dbReference type="KEGG" id="mma:MM_1222"/>
<dbReference type="PATRIC" id="fig|192952.21.peg.1427"/>
<dbReference type="eggNOG" id="arCOG04301">
    <property type="taxonomic scope" value="Archaea"/>
</dbReference>
<dbReference type="HOGENOM" id="CLU_062816_1_0_2"/>
<dbReference type="UniPathway" id="UPA00065"/>
<dbReference type="Proteomes" id="UP000000595">
    <property type="component" value="Chromosome"/>
</dbReference>
<dbReference type="GO" id="GO:0003934">
    <property type="term" value="F:GTP cyclohydrolase I activity"/>
    <property type="evidence" value="ECO:0007669"/>
    <property type="project" value="InterPro"/>
</dbReference>
<dbReference type="GO" id="GO:0044682">
    <property type="term" value="F:GTP cyclohydrolase IV activity"/>
    <property type="evidence" value="ECO:0007669"/>
    <property type="project" value="UniProtKB-UniRule"/>
</dbReference>
<dbReference type="GO" id="GO:0005506">
    <property type="term" value="F:iron ion binding"/>
    <property type="evidence" value="ECO:0007669"/>
    <property type="project" value="UniProtKB-UniRule"/>
</dbReference>
<dbReference type="GO" id="GO:2001118">
    <property type="term" value="P:tetrahydromethanopterin biosynthetic process"/>
    <property type="evidence" value="ECO:0007669"/>
    <property type="project" value="UniProtKB-UniRule"/>
</dbReference>
<dbReference type="Gene3D" id="3.10.270.10">
    <property type="entry name" value="Urate Oxidase"/>
    <property type="match status" value="1"/>
</dbReference>
<dbReference type="HAMAP" id="MF_01527_A">
    <property type="entry name" value="GTP_cyclohydrol_A"/>
    <property type="match status" value="1"/>
</dbReference>
<dbReference type="InterPro" id="IPR003801">
    <property type="entry name" value="GTP_cyclohydrolase_FolE2/MptA"/>
</dbReference>
<dbReference type="InterPro" id="IPR022840">
    <property type="entry name" value="GTP_cyclohydrolase_MptA"/>
</dbReference>
<dbReference type="NCBIfam" id="TIGR00294">
    <property type="entry name" value="GTP cyclohydrolase MptA"/>
    <property type="match status" value="1"/>
</dbReference>
<dbReference type="PANTHER" id="PTHR36445">
    <property type="entry name" value="GTP CYCLOHYDROLASE MPTA"/>
    <property type="match status" value="1"/>
</dbReference>
<dbReference type="PANTHER" id="PTHR36445:SF1">
    <property type="entry name" value="GTP CYCLOHYDROLASE MPTA"/>
    <property type="match status" value="1"/>
</dbReference>
<dbReference type="Pfam" id="PF02649">
    <property type="entry name" value="GCHY-1"/>
    <property type="match status" value="1"/>
</dbReference>
<sequence length="318" mass="35746">MEKCTFNLPDVQASKPSIAINLTRVGVTNMKKLVEIKRKDKRPIVLISTFDVFVDLPSDRKGANLSRNFEAVDEVLEKVLSTPVYEIEQLCSDIAHNLLGRHEYANQAEVRMKSEYMIRRASPSTGIKCQEVVNIFAEASAVRGNGDRDYFDVKKLIGAEVVGMTACPCAQEIMRDKAATELANLGVERDKIIKFLEKVPMATHNQRGRGIISIKVAHDFDVSLESIIKIIERSMSSSVYEVLKRSDEKVVVETAHMNPKFVEDCVRAMADNVVKEFPNLPDNAVITIKQTNEESIHRHNAFAERVALMGELRKEISQ</sequence>
<gene>
    <name evidence="1" type="primary">mptA</name>
    <name type="ordered locus">MM_1222</name>
</gene>
<feature type="chain" id="PRO_0000147745" description="GTP cyclohydrolase MptA">
    <location>
        <begin position="1"/>
        <end position="318"/>
    </location>
</feature>
<feature type="site" description="May be catalytically important" evidence="1">
    <location>
        <position position="167"/>
    </location>
</feature>
<reference key="1">
    <citation type="journal article" date="2002" name="J. Mol. Microbiol. Biotechnol.">
        <title>The genome of Methanosarcina mazei: evidence for lateral gene transfer between Bacteria and Archaea.</title>
        <authorList>
            <person name="Deppenmeier U."/>
            <person name="Johann A."/>
            <person name="Hartsch T."/>
            <person name="Merkl R."/>
            <person name="Schmitz R.A."/>
            <person name="Martinez-Arias R."/>
            <person name="Henne A."/>
            <person name="Wiezer A."/>
            <person name="Baeumer S."/>
            <person name="Jacobi C."/>
            <person name="Brueggemann H."/>
            <person name="Lienard T."/>
            <person name="Christmann A."/>
            <person name="Boemecke M."/>
            <person name="Steckel S."/>
            <person name="Bhattacharyya A."/>
            <person name="Lykidis A."/>
            <person name="Overbeek R."/>
            <person name="Klenk H.-P."/>
            <person name="Gunsalus R.P."/>
            <person name="Fritz H.-J."/>
            <person name="Gottschalk G."/>
        </authorList>
    </citation>
    <scope>NUCLEOTIDE SEQUENCE [LARGE SCALE GENOMIC DNA]</scope>
    <source>
        <strain>ATCC BAA-159 / DSM 3647 / Goe1 / Go1 / JCM 11833 / OCM 88</strain>
    </source>
</reference>
<proteinExistence type="inferred from homology"/>
<evidence type="ECO:0000255" key="1">
    <source>
        <dbReference type="HAMAP-Rule" id="MF_01527"/>
    </source>
</evidence>
<comment type="function">
    <text evidence="1">Converts GTP to 7,8-dihydro-D-neopterin 2',3'-cyclic phosphate, the first intermediate in the biosynthesis of coenzyme methanopterin.</text>
</comment>
<comment type="catalytic activity">
    <reaction evidence="1">
        <text>GTP + H2O = 7,8-dihydroneopterin 2',3'-cyclic phosphate + formate + diphosphate + H(+)</text>
        <dbReference type="Rhea" id="RHEA:25860"/>
        <dbReference type="ChEBI" id="CHEBI:15377"/>
        <dbReference type="ChEBI" id="CHEBI:15378"/>
        <dbReference type="ChEBI" id="CHEBI:15740"/>
        <dbReference type="ChEBI" id="CHEBI:33019"/>
        <dbReference type="ChEBI" id="CHEBI:37565"/>
        <dbReference type="ChEBI" id="CHEBI:58854"/>
        <dbReference type="EC" id="3.5.4.39"/>
    </reaction>
</comment>
<comment type="cofactor">
    <cofactor evidence="1">
        <name>Fe(2+)</name>
        <dbReference type="ChEBI" id="CHEBI:29033"/>
    </cofactor>
    <text evidence="1">Binds 1 Fe(2+) ion per subunit.</text>
</comment>
<comment type="pathway">
    <text evidence="1">Cofactor biosynthesis; 5,6,7,8-tetrahydromethanopterin biosynthesis.</text>
</comment>
<comment type="subunit">
    <text evidence="1">Homodimer.</text>
</comment>
<comment type="similarity">
    <text evidence="1">Belongs to the GTP cyclohydrolase IV family.</text>
</comment>
<protein>
    <recommendedName>
        <fullName evidence="1">GTP cyclohydrolase MptA</fullName>
        <ecNumber evidence="1">3.5.4.39</ecNumber>
    </recommendedName>
    <alternativeName>
        <fullName evidence="1">GTP cyclohydrolase IV</fullName>
    </alternativeName>
</protein>
<name>MPTA_METMA</name>
<keyword id="KW-0378">Hydrolase</keyword>
<keyword id="KW-0408">Iron</keyword>
<keyword id="KW-0479">Metal-binding</keyword>